<dbReference type="EMBL" id="M23661">
    <property type="protein sequence ID" value="AAA29306.1"/>
    <property type="molecule type" value="mRNA"/>
</dbReference>
<dbReference type="EMBL" id="M23662">
    <property type="protein sequence ID" value="AAA29307.1"/>
    <property type="molecule type" value="mRNA"/>
</dbReference>
<dbReference type="PIR" id="D32021">
    <property type="entry name" value="D32021"/>
</dbReference>
<dbReference type="SMR" id="P14665"/>
<dbReference type="TCDB" id="1.C.17.1.4">
    <property type="family name" value="the cecropin (cecropin) family"/>
</dbReference>
<dbReference type="OrthoDB" id="7410372at2759"/>
<dbReference type="GO" id="GO:0005576">
    <property type="term" value="C:extracellular region"/>
    <property type="evidence" value="ECO:0007669"/>
    <property type="project" value="UniProtKB-SubCell"/>
</dbReference>
<dbReference type="GO" id="GO:0019731">
    <property type="term" value="P:antibacterial humoral response"/>
    <property type="evidence" value="ECO:0007669"/>
    <property type="project" value="InterPro"/>
</dbReference>
<dbReference type="GO" id="GO:0050830">
    <property type="term" value="P:defense response to Gram-positive bacterium"/>
    <property type="evidence" value="ECO:0007669"/>
    <property type="project" value="UniProtKB-ARBA"/>
</dbReference>
<dbReference type="GO" id="GO:0045087">
    <property type="term" value="P:innate immune response"/>
    <property type="evidence" value="ECO:0007669"/>
    <property type="project" value="UniProtKB-KW"/>
</dbReference>
<dbReference type="InterPro" id="IPR000875">
    <property type="entry name" value="Cecropin"/>
</dbReference>
<dbReference type="Pfam" id="PF00272">
    <property type="entry name" value="Cecropin"/>
    <property type="match status" value="1"/>
</dbReference>
<dbReference type="PROSITE" id="PS00268">
    <property type="entry name" value="CECROPIN"/>
    <property type="match status" value="1"/>
</dbReference>
<proteinExistence type="evidence at protein level"/>
<keyword id="KW-0027">Amidation</keyword>
<keyword id="KW-0044">Antibiotic</keyword>
<keyword id="KW-0929">Antimicrobial</keyword>
<keyword id="KW-0391">Immunity</keyword>
<keyword id="KW-0399">Innate immunity</keyword>
<keyword id="KW-0964">Secreted</keyword>
<keyword id="KW-0732">Signal</keyword>
<evidence type="ECO:0000305" key="1"/>
<evidence type="ECO:0000305" key="2">
    <source>
    </source>
</evidence>
<feature type="signal peptide" evidence="1">
    <location>
        <begin position="1"/>
        <end position="22"/>
    </location>
</feature>
<feature type="propeptide" id="PRO_0000004873" description="Removed by a dipeptidylpeptidase">
    <location>
        <begin position="23"/>
        <end position="24"/>
    </location>
</feature>
<feature type="chain" id="PRO_0000004874" description="Bactericidin B-5P">
    <location>
        <begin position="25"/>
        <end position="60"/>
    </location>
</feature>
<feature type="modified residue" description="Glycine amide" evidence="2">
    <location>
        <position position="60"/>
    </location>
</feature>
<organism>
    <name type="scientific">Manduca sexta</name>
    <name type="common">Tobacco hawkmoth</name>
    <name type="synonym">Tobacco hornworm</name>
    <dbReference type="NCBI Taxonomy" id="7130"/>
    <lineage>
        <taxon>Eukaryota</taxon>
        <taxon>Metazoa</taxon>
        <taxon>Ecdysozoa</taxon>
        <taxon>Arthropoda</taxon>
        <taxon>Hexapoda</taxon>
        <taxon>Insecta</taxon>
        <taxon>Pterygota</taxon>
        <taxon>Neoptera</taxon>
        <taxon>Endopterygota</taxon>
        <taxon>Lepidoptera</taxon>
        <taxon>Glossata</taxon>
        <taxon>Ditrysia</taxon>
        <taxon>Bombycoidea</taxon>
        <taxon>Sphingidae</taxon>
        <taxon>Sphinginae</taxon>
        <taxon>Sphingini</taxon>
        <taxon>Manduca</taxon>
    </lineage>
</organism>
<comment type="function">
    <text>Cecropins have lytic and antibacterial activity against several Gram-positive and Gram-negative bacteria.</text>
</comment>
<comment type="subcellular location">
    <subcellularLocation>
        <location>Secreted</location>
    </subcellularLocation>
</comment>
<comment type="similarity">
    <text evidence="1">Belongs to the cecropin family.</text>
</comment>
<reference key="1">
    <citation type="journal article" date="1988" name="J. Biol. Chem.">
        <title>A family of bacteria-regulated, cecropin D-like peptides from Manduca sexta.</title>
        <authorList>
            <person name="Dickinson L."/>
            <person name="Russel V."/>
            <person name="Dunn P.E."/>
        </authorList>
    </citation>
    <scope>NUCLEOTIDE SEQUENCE [MRNA]</scope>
    <scope>AMIDATION AT GLY-60</scope>
</reference>
<name>CEC5_MANSE</name>
<sequence length="61" mass="6389">MNFSRVLFFVFACLSAFAMASAAPWNPFKELERAGQRVRDAVISAAAVATVGQAAAIARGG</sequence>
<protein>
    <recommendedName>
        <fullName>Bactericidin B-5P</fullName>
    </recommendedName>
    <alternativeName>
        <fullName>Cecropin-like peptide B-5</fullName>
    </alternativeName>
</protein>
<accession>P14665</accession>